<protein>
    <recommendedName>
        <fullName>Endoprotease bli-4</fullName>
        <ecNumber evidence="14">3.4.21.-</ecNumber>
    </recommendedName>
    <alternativeName>
        <fullName>Blisterase</fullName>
    </alternativeName>
    <alternativeName>
        <fullName>Blistered cuticle protein 4</fullName>
    </alternativeName>
</protein>
<feature type="signal peptide" evidence="4">
    <location>
        <begin position="1"/>
        <end position="22"/>
    </location>
</feature>
<feature type="propeptide" id="PRO_0000439500" evidence="3">
    <location>
        <begin position="23"/>
        <end position="116"/>
    </location>
</feature>
<feature type="chain" id="PRO_0000026997" description="Endoprotease bli-4" evidence="4">
    <location>
        <begin position="117"/>
        <end position="942"/>
    </location>
</feature>
<feature type="topological domain" description="Lumenal" evidence="16">
    <location>
        <begin position="117"/>
        <end position="871"/>
    </location>
</feature>
<feature type="transmembrane region" description="Helical" evidence="4">
    <location>
        <begin position="872"/>
        <end position="892"/>
    </location>
</feature>
<feature type="topological domain" description="Cytoplasmic" evidence="16">
    <location>
        <begin position="893"/>
        <end position="942"/>
    </location>
</feature>
<feature type="domain" description="Peptidase S8" evidence="7">
    <location>
        <begin position="168"/>
        <end position="483"/>
    </location>
</feature>
<feature type="domain" description="P/Homo B" evidence="6">
    <location>
        <begin position="491"/>
        <end position="629"/>
    </location>
</feature>
<feature type="repeat" description="FU 1" evidence="4">
    <location>
        <begin position="674"/>
        <end position="723"/>
    </location>
</feature>
<feature type="repeat" description="FU 2" evidence="4">
    <location>
        <begin position="725"/>
        <end position="777"/>
    </location>
</feature>
<feature type="repeat" description="FU 3" evidence="4">
    <location>
        <begin position="804"/>
        <end position="850"/>
    </location>
</feature>
<feature type="region of interest" description="Disordered" evidence="8">
    <location>
        <begin position="130"/>
        <end position="160"/>
    </location>
</feature>
<feature type="region of interest" description="Disordered" evidence="8">
    <location>
        <begin position="211"/>
        <end position="242"/>
    </location>
</feature>
<feature type="region of interest" description="Disordered" evidence="8">
    <location>
        <begin position="922"/>
        <end position="942"/>
    </location>
</feature>
<feature type="compositionally biased region" description="Acidic residues" evidence="8">
    <location>
        <begin position="926"/>
        <end position="935"/>
    </location>
</feature>
<feature type="active site" description="Charge relay system" evidence="7">
    <location>
        <position position="202"/>
    </location>
</feature>
<feature type="active site" description="Charge relay system" evidence="7">
    <location>
        <position position="241"/>
    </location>
</feature>
<feature type="active site" description="Charge relay system" evidence="7">
    <location>
        <position position="415"/>
    </location>
</feature>
<feature type="binding site" evidence="1">
    <location>
        <position position="124"/>
    </location>
    <ligand>
        <name>Ca(2+)</name>
        <dbReference type="ChEBI" id="CHEBI:29108"/>
        <label>1</label>
    </ligand>
</feature>
<feature type="binding site" evidence="1">
    <location>
        <position position="203"/>
    </location>
    <ligand>
        <name>substrate</name>
    </ligand>
</feature>
<feature type="binding site" evidence="1">
    <location>
        <position position="211"/>
    </location>
    <ligand>
        <name>Ca(2+)</name>
        <dbReference type="ChEBI" id="CHEBI:29108"/>
        <label>1</label>
    </ligand>
</feature>
<feature type="binding site" evidence="1">
    <location>
        <position position="223"/>
    </location>
    <ligand>
        <name>Ca(2+)</name>
        <dbReference type="ChEBI" id="CHEBI:29108"/>
        <label>2</label>
    </ligand>
</feature>
<feature type="binding site" evidence="1">
    <location>
        <position position="228"/>
    </location>
    <ligand>
        <name>Ca(2+)</name>
        <dbReference type="ChEBI" id="CHEBI:29108"/>
        <label>2</label>
    </ligand>
</feature>
<feature type="binding site" evidence="1">
    <location>
        <position position="230"/>
    </location>
    <ligand>
        <name>Ca(2+)</name>
        <dbReference type="ChEBI" id="CHEBI:29108"/>
        <label>2</label>
    </ligand>
</feature>
<feature type="binding site" evidence="1">
    <location>
        <begin position="238"/>
        <end position="239"/>
    </location>
    <ligand>
        <name>substrate</name>
    </ligand>
</feature>
<feature type="binding site" evidence="1">
    <location>
        <position position="252"/>
    </location>
    <ligand>
        <name>Ca(2+)</name>
        <dbReference type="ChEBI" id="CHEBI:29108"/>
        <label>1</label>
    </ligand>
</feature>
<feature type="binding site" evidence="1">
    <location>
        <position position="255"/>
    </location>
    <ligand>
        <name>Ca(2+)</name>
        <dbReference type="ChEBI" id="CHEBI:29108"/>
        <label>1</label>
    </ligand>
</feature>
<feature type="binding site" evidence="1">
    <location>
        <position position="257"/>
    </location>
    <ligand>
        <name>Ca(2+)</name>
        <dbReference type="ChEBI" id="CHEBI:29108"/>
        <label>1</label>
    </ligand>
</feature>
<feature type="binding site" evidence="1">
    <location>
        <position position="259"/>
    </location>
    <ligand>
        <name>Ca(2+)</name>
        <dbReference type="ChEBI" id="CHEBI:29108"/>
        <label>1</label>
    </ligand>
</feature>
<feature type="binding site" evidence="1">
    <location>
        <position position="283"/>
    </location>
    <ligand>
        <name>substrate</name>
    </ligand>
</feature>
<feature type="binding site" evidence="1">
    <location>
        <begin position="300"/>
        <end position="305"/>
    </location>
    <ligand>
        <name>substrate</name>
    </ligand>
</feature>
<feature type="binding site" evidence="1">
    <location>
        <position position="305"/>
    </location>
    <ligand>
        <name>Ca(2+)</name>
        <dbReference type="ChEBI" id="CHEBI:29108"/>
        <label>3</label>
    </ligand>
</feature>
<feature type="binding site" evidence="1">
    <location>
        <position position="311"/>
    </location>
    <ligand>
        <name>substrate</name>
    </ligand>
</feature>
<feature type="binding site" evidence="1">
    <location>
        <begin position="339"/>
        <end position="342"/>
    </location>
    <ligand>
        <name>substrate</name>
    </ligand>
</feature>
<feature type="binding site" evidence="1">
    <location>
        <position position="348"/>
    </location>
    <ligand>
        <name>Ca(2+)</name>
        <dbReference type="ChEBI" id="CHEBI:29108"/>
        <label>3</label>
    </ligand>
</feature>
<feature type="binding site" evidence="1">
    <location>
        <position position="353"/>
    </location>
    <ligand>
        <name>substrate</name>
    </ligand>
</feature>
<feature type="binding site" evidence="1">
    <location>
        <position position="355"/>
    </location>
    <ligand>
        <name>substrate</name>
    </ligand>
</feature>
<feature type="binding site" evidence="1">
    <location>
        <position position="378"/>
    </location>
    <ligand>
        <name>Ca(2+)</name>
        <dbReference type="ChEBI" id="CHEBI:29108"/>
        <label>3</label>
    </ligand>
</feature>
<feature type="binding site" evidence="1">
    <location>
        <position position="415"/>
    </location>
    <ligand>
        <name>substrate</name>
    </ligand>
</feature>
<feature type="site" description="Cleavage; by autolysis" evidence="3">
    <location>
        <begin position="116"/>
        <end position="117"/>
    </location>
</feature>
<feature type="glycosylation site" description="N-linked (GlcNAc...) asparagine" evidence="5">
    <location>
        <position position="195"/>
    </location>
</feature>
<feature type="glycosylation site" description="N-linked (GlcNAc...) asparagine" evidence="5">
    <location>
        <position position="519"/>
    </location>
</feature>
<feature type="glycosylation site" description="N-linked (GlcNAc...) asparagine" evidence="5">
    <location>
        <position position="868"/>
    </location>
</feature>
<feature type="disulfide bond" evidence="2">
    <location>
        <begin position="258"/>
        <end position="407"/>
    </location>
</feature>
<feature type="disulfide bond" evidence="2">
    <location>
        <begin position="350"/>
        <end position="380"/>
    </location>
</feature>
<feature type="disulfide bond" evidence="2">
    <location>
        <begin position="498"/>
        <end position="527"/>
    </location>
</feature>
<feature type="splice variant" id="VSP_058857" description="In isoform h." evidence="16">
    <original>VEESAPISFPDLTSAGNCHDECNGGCTESSSATSCFACKHLTQTLRNKGGSGFKCVQKCDDTYYLDGDKCKMCSSHCHTCTKAEVCETC</original>
    <variation>IGMPSVLVVIQIIVICLVLGVGLYACRRQQVQDSTVGAPTPSAPEDVAMTSLSPRESEDEQLRKAIAASIEEEAERKMIERALSDAEKL</variation>
    <location>
        <begin position="658"/>
        <end position="746"/>
    </location>
</feature>
<feature type="splice variant" id="VSP_058858" description="In isoform g." evidence="16">
    <original>VEESAPISFPDLTSAGNCHDECNGGCTESSSATSCFACKHLTQTLRNKGGSGFKCVQKCDDTYYLDGDKCKMCSSHCH</original>
    <variation>KRTFSKRPQAFSRVRQMPIPSGVTQQRQWVPQRPQPQSVFQQATFGQWVWDPVSQRWVWSRRIRKHQPEPVHRRRYKH</variation>
    <location>
        <begin position="658"/>
        <end position="735"/>
    </location>
</feature>
<feature type="splice variant" id="VSP_058859" description="In isoform b." evidence="16">
    <original>VEESAPISFPDLTSAGNCHDECNGGCTESSSATSCFACKHLTQTLRNKGGSGFKCVQKCDDTYYLDGDKCKMC</original>
    <variation>GDEVVERIRNHWEVTLEESSHWNWEHAREHKSLQELNSSSRTHSFLYSFTKFQPIFLIILVCIFDAIHRQFAV</variation>
    <location>
        <begin position="658"/>
        <end position="730"/>
    </location>
</feature>
<feature type="splice variant" id="VSP_058860" description="In isoform e." evidence="16">
    <original>VEESAPISFPDLTSAGNCHDECNGGCTESSSATSCFACKHLTQTLRNKGGSGFKCVQKCDDTYYLDG</original>
    <variation>NEPLLRIASSQHYRLSPSSIHQSLLPFAQFSNSYPTPPPFYQSTSNHRPTYIYLPRPRRFLLTNQLI</variation>
    <location>
        <begin position="658"/>
        <end position="724"/>
    </location>
</feature>
<feature type="splice variant" id="VSP_058861" description="In isoform i." evidence="16">
    <original>VEESAPISFPDLTSAGNCHDECNGGCTESSSATSCFACKHLTQTLRNKGGSGFKCVQKC</original>
    <variation>STKNGGNETLLVDFSKGEKSISPWTFSSYQTGIANLKNYFDQFFMKMFGGTPGVNRPWR</variation>
    <location>
        <begin position="658"/>
        <end position="716"/>
    </location>
</feature>
<feature type="splice variant" id="VSP_058862" description="In isoform j." evidence="16">
    <original>VEESAPISFPDLTSA</original>
    <variation>QVRKSSARYIQRAFP</variation>
    <location>
        <begin position="658"/>
        <end position="672"/>
    </location>
</feature>
<feature type="splice variant" id="VSP_058863" description="In isoform a." evidence="16">
    <original>VEESAPISFPDLT</original>
    <variation>ILITIAIHLVVNA</variation>
    <location>
        <begin position="658"/>
        <end position="670"/>
    </location>
</feature>
<feature type="splice variant" id="VSP_058864" description="In isoform f." evidence="16">
    <original>EESAPISF</original>
    <variation>RTFFGGFG</variation>
    <location>
        <begin position="659"/>
        <end position="666"/>
    </location>
</feature>
<feature type="splice variant" id="VSP_058865" description="In isoform f." evidence="16">
    <location>
        <begin position="667"/>
        <end position="942"/>
    </location>
</feature>
<feature type="splice variant" id="VSP_058866" description="In isoform a." evidence="16">
    <location>
        <begin position="671"/>
        <end position="942"/>
    </location>
</feature>
<feature type="splice variant" id="VSP_058867" description="In isoform j." evidence="16">
    <location>
        <begin position="673"/>
        <end position="942"/>
    </location>
</feature>
<feature type="splice variant" id="VSP_058868" description="In isoform i." evidence="16">
    <location>
        <begin position="717"/>
        <end position="942"/>
    </location>
</feature>
<feature type="splice variant" id="VSP_058869" description="In isoform e." evidence="16">
    <location>
        <begin position="725"/>
        <end position="942"/>
    </location>
</feature>
<feature type="splice variant" id="VSP_058870" description="In isoform b." evidence="16">
    <location>
        <begin position="731"/>
        <end position="942"/>
    </location>
</feature>
<feature type="splice variant" id="VSP_058871" description="In isoform g." evidence="16">
    <location>
        <begin position="736"/>
        <end position="942"/>
    </location>
</feature>
<feature type="splice variant" id="VSP_058872" description="In isoform h." evidence="16">
    <location>
        <begin position="747"/>
        <end position="942"/>
    </location>
</feature>
<feature type="splice variant" id="VSP_058873" description="In isoform c." evidence="16">
    <original>ESNLVQAKCIWRKDLCGDGYYINAVGKCDLCDSSCETCTAPGPMSCEKC</original>
    <variation>AENFDFCAKNNESGRDTTVFVKFKKPSAFKDYCNLKLVDLDFFIFSLLF</variation>
    <location>
        <begin position="779"/>
        <end position="827"/>
    </location>
</feature>
<feature type="splice variant" id="VSP_058874" description="In isoform c." evidence="16">
    <location>
        <begin position="828"/>
        <end position="942"/>
    </location>
</feature>
<feature type="mutagenesis site" description="No visible phenotype." evidence="9">
    <original>H</original>
    <variation>L</variation>
    <location>
        <position position="127"/>
    </location>
</feature>
<feature type="mutagenesis site" description="In h254; lethal at late embryonic stage." evidence="9">
    <original>G</original>
    <variation>E</variation>
    <location>
        <position position="307"/>
    </location>
</feature>
<feature type="mutagenesis site" description="In h520; lethal at late embryonic stage." evidence="9">
    <original>P</original>
    <variation>L</variation>
    <location>
        <position position="313"/>
    </location>
</feature>
<feature type="mutagenesis site" description="In h427; lethal at late embryonic stage." evidence="9">
    <original>G</original>
    <variation>E</variation>
    <location>
        <position position="341"/>
    </location>
</feature>
<feature type="mutagenesis site" description="In h42; lethal at late embryonic stage." evidence="9">
    <original>E</original>
    <variation>K</variation>
    <location>
        <position position="378"/>
    </location>
</feature>
<feature type="mutagenesis site" description="In h384; probably catalytically inactive. Lethal at late embryonic stage." evidence="9">
    <original>S</original>
    <variation>E</variation>
    <location>
        <position position="415"/>
    </location>
</feature>
<feature type="sequence conflict" description="In Ref. 1; AAA98750/AAA98751." evidence="16" ref="1">
    <original>R</original>
    <variation>A</variation>
    <location>
        <position position="153"/>
    </location>
</feature>
<feature type="sequence conflict" description="In Ref. 1; AAA98750/AAA98751." evidence="16" ref="1">
    <original>R</original>
    <variation>S</variation>
    <location>
        <position position="346"/>
    </location>
</feature>
<feature type="sequence conflict" description="In Ref. 1; AAA98752." evidence="16" ref="1">
    <original>PI</original>
    <variation>RS</variation>
    <location>
        <begin position="663"/>
        <end position="664"/>
    </location>
</feature>
<feature type="sequence conflict" description="In Ref. 1; AAA98752." evidence="16" ref="1">
    <original>AGNCH</original>
    <variation>GWKLSC</variation>
    <location>
        <begin position="672"/>
        <end position="676"/>
    </location>
</feature>
<feature type="sequence conflict" description="In Ref. 1; AAA98752." evidence="16" ref="1">
    <original>C</original>
    <variation>Y</variation>
    <location>
        <position position="695"/>
    </location>
</feature>
<evidence type="ECO:0000250" key="1">
    <source>
        <dbReference type="UniProtKB" id="P09958"/>
    </source>
</evidence>
<evidence type="ECO:0000250" key="2">
    <source>
        <dbReference type="UniProtKB" id="P23188"/>
    </source>
</evidence>
<evidence type="ECO:0000250" key="3">
    <source>
        <dbReference type="UniProtKB" id="P29122"/>
    </source>
</evidence>
<evidence type="ECO:0000255" key="4"/>
<evidence type="ECO:0000255" key="5">
    <source>
        <dbReference type="PROSITE-ProRule" id="PRU00498"/>
    </source>
</evidence>
<evidence type="ECO:0000255" key="6">
    <source>
        <dbReference type="PROSITE-ProRule" id="PRU01173"/>
    </source>
</evidence>
<evidence type="ECO:0000255" key="7">
    <source>
        <dbReference type="PROSITE-ProRule" id="PRU01240"/>
    </source>
</evidence>
<evidence type="ECO:0000256" key="8">
    <source>
        <dbReference type="SAM" id="MobiDB-lite"/>
    </source>
</evidence>
<evidence type="ECO:0000269" key="9">
    <source>
    </source>
</evidence>
<evidence type="ECO:0000269" key="10">
    <source>
    </source>
</evidence>
<evidence type="ECO:0000269" key="11">
    <source>
    </source>
</evidence>
<evidence type="ECO:0000269" key="12">
    <source>
    </source>
</evidence>
<evidence type="ECO:0000269" key="13">
    <source>
    </source>
</evidence>
<evidence type="ECO:0000303" key="14">
    <source>
    </source>
</evidence>
<evidence type="ECO:0000303" key="15">
    <source>
    </source>
</evidence>
<evidence type="ECO:0000305" key="16"/>
<evidence type="ECO:0000312" key="17">
    <source>
        <dbReference type="WormBase" id="K04F10.4a"/>
    </source>
</evidence>
<evidence type="ECO:0000312" key="18">
    <source>
        <dbReference type="WormBase" id="K04F10.4b"/>
    </source>
</evidence>
<evidence type="ECO:0000312" key="19">
    <source>
        <dbReference type="WormBase" id="K04F10.4c"/>
    </source>
</evidence>
<evidence type="ECO:0000312" key="20">
    <source>
        <dbReference type="WormBase" id="K04F10.4d"/>
    </source>
</evidence>
<evidence type="ECO:0000312" key="21">
    <source>
        <dbReference type="WormBase" id="K04F10.4e"/>
    </source>
</evidence>
<evidence type="ECO:0000312" key="22">
    <source>
        <dbReference type="WormBase" id="K04F10.4f"/>
    </source>
</evidence>
<evidence type="ECO:0000312" key="23">
    <source>
        <dbReference type="WormBase" id="K04F10.4g"/>
    </source>
</evidence>
<evidence type="ECO:0000312" key="24">
    <source>
        <dbReference type="WormBase" id="K04F10.4h"/>
    </source>
</evidence>
<evidence type="ECO:0000312" key="25">
    <source>
        <dbReference type="WormBase" id="K04F10.4i"/>
    </source>
</evidence>
<evidence type="ECO:0000312" key="26">
    <source>
        <dbReference type="WormBase" id="K04F10.4j"/>
    </source>
</evidence>
<sequence length="942" mass="103015">MRISIGRIAWQILAVLIAVAFTIEHDSICDESIGACGEPIHTVIRLAKRDDELARRIAADHDMHVKGDPFLDTHYFLYHSETTRTRRHKRAIVERLDSHPAVEWVEEQRPKKRVKRDYILLDNDVHHSNPFRRSVLNRDGTRRAQRQQPQSPREIPSLPFPDPLYKDQWYLHGGAVGGYDMNVRQAWLQGYAGRNVSVSILDDGIQRDHPDLAANYDPLASTDINDHDDDPTPQNNGDNKHGTRCAGEVAALAGNNQCGVGVAFKAKIGGVRMLDGAVSDSVEAASLSLNQDHIDIYSASWGPEDDGKTFDGPGPLAREAFYRGIKNGRGGKGNIFVWASGNGGSRQDSCSADGYTTSVYTLSISSATYDNHRPWYLEECPSSIATTYSSADFRQPAIVTVDVPGGCTDKHTGTSASAPLAAGIIALALEANPELTWRDMQHLVLRTANWKPLENNPGWSRNGVGRMVSNKFGYGLIDGGALVNMAKTWKTVPEQHICTYEYRLANPNPRPIVGRFQLNFTLDVNGCESGTPVLYLEHVQVHATVRYLKRGDLKLTLFSPSGTRSVLLPPRPQDFNANGFHKWPFLSVQQWGEDPRGTWLLMVESVTTNPAATGTFHDWTLLLYGTADPAQSGDPVYSATPATSQGVLSRVHQLTSQVEESAPISFPDLTSAGNCHDECNGGCTESSSATSCFACKHLTQTLRNKGGSGFKCVQKCDDTYYLDGDKCKMCSSHCHTCTKAEVCETCPGSLLLIDVDNMPHYDHGKCVESCPPGLVADYESNLVQAKCIWRKDLCGDGYYINAVGKCDLCDSSCETCTAPGPMSCEKCSKGYGKGSIGYCRPCCPEGSTKSWQCEDCSKPDPTLLIDSNKSSGFGLMFWIVVSLIAACGICACKKCASETKSSNVEYAPLAQYNATNGAINLGAHTDDEDDDEDEVFVNPQIV</sequence>
<reference key="1">
    <citation type="journal article" date="1995" name="Genes Dev.">
        <title>The bli-4 locus of Caenorhabditis elegans encodes structurally distinct kex2/subtilisin-like endoproteases essential for early development and adult morphology.</title>
        <authorList>
            <person name="Thacker C."/>
            <person name="Peters K.W."/>
            <person name="Srayko M."/>
            <person name="Rose A.M."/>
        </authorList>
    </citation>
    <scope>NUCLEOTIDE SEQUENCE [MRNA] (ISOFORMS A; B; C AND D)</scope>
    <scope>FUNCTION</scope>
    <scope>TISSUE SPECIFICITY</scope>
    <scope>DEVELOPMENTAL STAGE</scope>
    <source>
        <strain>Bristol N2</strain>
    </source>
</reference>
<reference key="2">
    <citation type="journal article" date="1998" name="Science">
        <title>Genome sequence of the nematode C. elegans: a platform for investigating biology.</title>
        <authorList>
            <consortium name="The C. elegans sequencing consortium"/>
        </authorList>
    </citation>
    <scope>NUCLEOTIDE SEQUENCE [LARGE SCALE GENOMIC DNA]</scope>
    <source>
        <strain>Bristol N2</strain>
    </source>
</reference>
<reference key="3">
    <citation type="journal article" date="2000" name="Gene">
        <title>Mutational analysis of bli-4/kpc-4 reveals critical residues required for proprotein convertase function in C. elegans.</title>
        <authorList>
            <person name="Thacker C."/>
            <person name="Srayko M."/>
            <person name="Rose A.M."/>
        </authorList>
    </citation>
    <scope>FUNCTION</scope>
    <scope>ALTERNATIVE SPLICING</scope>
    <scope>MUTAGENESIS OF HIS-127; GLY-307; PRO-313; GLY-341; GLU-378 AND SER-415</scope>
</reference>
<reference key="4">
    <citation type="journal article" date="2010" name="Mol. Biochem. Parasitol.">
        <title>The kunitz domain protein BLI-5 plays a functionally conserved role in cuticle formation in a diverse range of nematodes.</title>
        <authorList>
            <person name="Stepek G."/>
            <person name="McCormack G."/>
            <person name="Page A.P."/>
        </authorList>
    </citation>
    <scope>FUNCTION</scope>
    <scope>DEVELOPMENTAL STAGE</scope>
    <scope>DISRUPTION PHENOTYPE</scope>
</reference>
<reference key="5">
    <citation type="journal article" date="2013" name="Nat. Neurosci.">
        <title>Neuropeptide signaling remodels chemosensory circuit composition in Caenorhabditis elegans.</title>
        <authorList>
            <person name="Leinwand S.G."/>
            <person name="Chalasani S.H."/>
        </authorList>
    </citation>
    <scope>FUNCTION</scope>
    <scope>CATALYTIC ACTIVITY</scope>
    <scope>DISRUPTION PHENOTYPE</scope>
</reference>
<reference key="6">
    <citation type="journal article" date="2023" name="PLoS Genet.">
        <title>The proprotein convertase BLI-4 promotes collagen secretion prior to assembly of the Caenorhabditis elegans cuticle.</title>
        <authorList>
            <person name="Birnbaum S.K."/>
            <person name="Cohen J.D."/>
            <person name="Belfi A."/>
            <person name="Murray J.I."/>
            <person name="Adams J.R.G."/>
            <person name="Chisholm A.D."/>
            <person name="Sundaram M.V."/>
        </authorList>
    </citation>
    <scope>FUNCTION</scope>
    <scope>TISSUE SPECIFICITY</scope>
</reference>
<accession>P51559</accession>
<accession>A0A0M7RDN9</accession>
<accession>A0A0M7RDU4</accession>
<accession>A0A0M7RE83</accession>
<accession>A0A0M7RFE9</accession>
<accession>G8JYA5</accession>
<accession>O44762</accession>
<accession>O44763</accession>
<accession>O44764</accession>
<accession>O44765</accession>
<accession>O44766</accession>
<dbReference type="EC" id="3.4.21.-" evidence="14"/>
<dbReference type="EMBL" id="L29438">
    <property type="protein sequence ID" value="AAA98750.1"/>
    <property type="status" value="ALT_FRAME"/>
    <property type="molecule type" value="mRNA"/>
</dbReference>
<dbReference type="EMBL" id="L29439">
    <property type="protein sequence ID" value="AAA98751.1"/>
    <property type="status" value="ALT_FRAME"/>
    <property type="molecule type" value="mRNA"/>
</dbReference>
<dbReference type="EMBL" id="L29440">
    <property type="protein sequence ID" value="AAA98752.1"/>
    <property type="molecule type" value="mRNA"/>
</dbReference>
<dbReference type="EMBL" id="BX284601">
    <property type="protein sequence ID" value="CCD70035.1"/>
    <property type="molecule type" value="Genomic_DNA"/>
</dbReference>
<dbReference type="EMBL" id="BX284601">
    <property type="protein sequence ID" value="CCD70036.1"/>
    <property type="molecule type" value="Genomic_DNA"/>
</dbReference>
<dbReference type="EMBL" id="BX284601">
    <property type="protein sequence ID" value="CCD70037.1"/>
    <property type="molecule type" value="Genomic_DNA"/>
</dbReference>
<dbReference type="EMBL" id="BX284601">
    <property type="protein sequence ID" value="CCD70038.1"/>
    <property type="molecule type" value="Genomic_DNA"/>
</dbReference>
<dbReference type="EMBL" id="BX284601">
    <property type="protein sequence ID" value="CCD70039.1"/>
    <property type="molecule type" value="Genomic_DNA"/>
</dbReference>
<dbReference type="EMBL" id="BX284601">
    <property type="protein sequence ID" value="CCD70040.1"/>
    <property type="molecule type" value="Genomic_DNA"/>
</dbReference>
<dbReference type="EMBL" id="BX284601">
    <property type="protein sequence ID" value="CUR29975.1"/>
    <property type="molecule type" value="Genomic_DNA"/>
</dbReference>
<dbReference type="EMBL" id="BX284601">
    <property type="protein sequence ID" value="CUR29976.1"/>
    <property type="molecule type" value="Genomic_DNA"/>
</dbReference>
<dbReference type="EMBL" id="BX284601">
    <property type="protein sequence ID" value="CUR29977.1"/>
    <property type="molecule type" value="Genomic_DNA"/>
</dbReference>
<dbReference type="EMBL" id="BX284601">
    <property type="protein sequence ID" value="CUR29978.1"/>
    <property type="molecule type" value="Genomic_DNA"/>
</dbReference>
<dbReference type="PIR" id="D87803">
    <property type="entry name" value="D87803"/>
</dbReference>
<dbReference type="PIR" id="E87803">
    <property type="entry name" value="E87803"/>
</dbReference>
<dbReference type="PIR" id="F87803">
    <property type="entry name" value="F87803"/>
</dbReference>
<dbReference type="PIR" id="T37314">
    <property type="entry name" value="T37314"/>
</dbReference>
<dbReference type="RefSeq" id="NP_001021540.1">
    <molecule id="P51559-6"/>
    <property type="nucleotide sequence ID" value="NM_001026369.7"/>
</dbReference>
<dbReference type="RefSeq" id="NP_001021541.1">
    <property type="nucleotide sequence ID" value="NM_001026370.3"/>
</dbReference>
<dbReference type="RefSeq" id="NP_001021542.1">
    <property type="nucleotide sequence ID" value="NM_001026371.3"/>
</dbReference>
<dbReference type="RefSeq" id="NP_001021543.1">
    <molecule id="P51559-15"/>
    <property type="nucleotide sequence ID" value="NM_001026372.7"/>
</dbReference>
<dbReference type="RefSeq" id="NP_001021544.2">
    <property type="nucleotide sequence ID" value="NM_001026373.4"/>
</dbReference>
<dbReference type="RefSeq" id="NP_001021545.1">
    <property type="nucleotide sequence ID" value="NM_001026374.3"/>
</dbReference>
<dbReference type="RefSeq" id="NP_001303778.1">
    <molecule id="P51559-11"/>
    <property type="nucleotide sequence ID" value="NM_001316849.3"/>
</dbReference>
<dbReference type="RefSeq" id="NP_001303779.1">
    <molecule id="P51559-12"/>
    <property type="nucleotide sequence ID" value="NM_001316850.3"/>
</dbReference>
<dbReference type="RefSeq" id="NP_001303780.1">
    <property type="nucleotide sequence ID" value="NM_001316851.1"/>
</dbReference>
<dbReference type="RefSeq" id="NP_001303781.1">
    <molecule id="P51559-14"/>
    <property type="nucleotide sequence ID" value="NM_001316852.3"/>
</dbReference>
<dbReference type="RefSeq" id="NP_001360008.1">
    <molecule id="P51559-10"/>
    <property type="nucleotide sequence ID" value="NM_001372959.2"/>
</dbReference>
<dbReference type="RefSeq" id="NP_001367785.1">
    <molecule id="P51559-7"/>
    <property type="nucleotide sequence ID" value="NM_001380518.3"/>
</dbReference>
<dbReference type="RefSeq" id="NP_001367786.1">
    <molecule id="P51559-8"/>
    <property type="nucleotide sequence ID" value="NM_001380517.2"/>
</dbReference>
<dbReference type="RefSeq" id="NP_001367787.1">
    <molecule id="P51559-9"/>
    <property type="nucleotide sequence ID" value="NM_001380523.1"/>
</dbReference>
<dbReference type="RefSeq" id="NP_001368583.1">
    <molecule id="P51559-13"/>
    <property type="nucleotide sequence ID" value="NM_001380521.1"/>
</dbReference>
<dbReference type="SMR" id="P51559"/>
<dbReference type="BioGRID" id="37786">
    <property type="interactions" value="1"/>
</dbReference>
<dbReference type="FunCoup" id="P51559">
    <property type="interactions" value="299"/>
</dbReference>
<dbReference type="IntAct" id="P51559">
    <property type="interactions" value="1"/>
</dbReference>
<dbReference type="STRING" id="6239.K04F10.4d.1"/>
<dbReference type="MEROPS" id="S08.031"/>
<dbReference type="GlyCosmos" id="P51559">
    <property type="glycosylation" value="3 sites, No reported glycans"/>
</dbReference>
<dbReference type="PaxDb" id="6239-K04F10.4d.1"/>
<dbReference type="PeptideAtlas" id="P51559"/>
<dbReference type="EnsemblMetazoa" id="K04F10.4a.1">
    <molecule id="P51559-6"/>
    <property type="protein sequence ID" value="K04F10.4a.1"/>
    <property type="gene ID" value="WBGene00000254"/>
</dbReference>
<dbReference type="EnsemblMetazoa" id="K04F10.4b.1">
    <molecule id="P51559-7"/>
    <property type="protein sequence ID" value="K04F10.4b.1"/>
    <property type="gene ID" value="WBGene00000254"/>
</dbReference>
<dbReference type="EnsemblMetazoa" id="K04F10.4c.1">
    <molecule id="P51559-8"/>
    <property type="protein sequence ID" value="K04F10.4c.1"/>
    <property type="gene ID" value="WBGene00000254"/>
</dbReference>
<dbReference type="EnsemblMetazoa" id="K04F10.4d.1">
    <molecule id="P51559-15"/>
    <property type="protein sequence ID" value="K04F10.4d.1"/>
    <property type="gene ID" value="WBGene00000254"/>
</dbReference>
<dbReference type="EnsemblMetazoa" id="K04F10.4d.2">
    <molecule id="P51559-15"/>
    <property type="protein sequence ID" value="K04F10.4d.2"/>
    <property type="gene ID" value="WBGene00000254"/>
</dbReference>
<dbReference type="EnsemblMetazoa" id="K04F10.4e.1">
    <molecule id="P51559-9"/>
    <property type="protein sequence ID" value="K04F10.4e.1"/>
    <property type="gene ID" value="WBGene00000254"/>
</dbReference>
<dbReference type="EnsemblMetazoa" id="K04F10.4f.1">
    <molecule id="P51559-10"/>
    <property type="protein sequence ID" value="K04F10.4f.1"/>
    <property type="gene ID" value="WBGene00000254"/>
</dbReference>
<dbReference type="EnsemblMetazoa" id="K04F10.4g.1">
    <molecule id="P51559-11"/>
    <property type="protein sequence ID" value="K04F10.4g.1"/>
    <property type="gene ID" value="WBGene00000254"/>
</dbReference>
<dbReference type="EnsemblMetazoa" id="K04F10.4h.1">
    <molecule id="P51559-12"/>
    <property type="protein sequence ID" value="K04F10.4h.1"/>
    <property type="gene ID" value="WBGene00000254"/>
</dbReference>
<dbReference type="EnsemblMetazoa" id="K04F10.4i.1">
    <molecule id="P51559-13"/>
    <property type="protein sequence ID" value="K04F10.4i.1"/>
    <property type="gene ID" value="WBGene00000254"/>
</dbReference>
<dbReference type="EnsemblMetazoa" id="K04F10.4j.1">
    <molecule id="P51559-14"/>
    <property type="protein sequence ID" value="K04F10.4j.1"/>
    <property type="gene ID" value="WBGene00000254"/>
</dbReference>
<dbReference type="GeneID" id="172333"/>
<dbReference type="KEGG" id="cel:CELE_K04F10.4"/>
<dbReference type="UCSC" id="K04F10.4f">
    <molecule id="P51559-15"/>
    <property type="organism name" value="c. elegans"/>
</dbReference>
<dbReference type="AGR" id="WB:WBGene00000254"/>
<dbReference type="CTD" id="172333"/>
<dbReference type="WormBase" id="K04F10.4a">
    <molecule id="P51559-6"/>
    <property type="protein sequence ID" value="CE11728"/>
    <property type="gene ID" value="WBGene00000254"/>
    <property type="gene designation" value="bli-4"/>
</dbReference>
<dbReference type="WormBase" id="K04F10.4b">
    <molecule id="P51559-7"/>
    <property type="protein sequence ID" value="CE11730"/>
    <property type="gene ID" value="WBGene00000254"/>
    <property type="gene designation" value="bli-4"/>
</dbReference>
<dbReference type="WormBase" id="K04F10.4c">
    <molecule id="P51559-8"/>
    <property type="protein sequence ID" value="CE11732"/>
    <property type="gene ID" value="WBGene00000254"/>
    <property type="gene designation" value="bli-4"/>
</dbReference>
<dbReference type="WormBase" id="K04F10.4d">
    <molecule id="P51559-15"/>
    <property type="protein sequence ID" value="CE11734"/>
    <property type="gene ID" value="WBGene00000254"/>
    <property type="gene designation" value="bli-4"/>
</dbReference>
<dbReference type="WormBase" id="K04F10.4e">
    <molecule id="P51559-9"/>
    <property type="protein sequence ID" value="CE51144"/>
    <property type="gene ID" value="WBGene00000254"/>
    <property type="gene designation" value="bli-4"/>
</dbReference>
<dbReference type="WormBase" id="K04F10.4f">
    <molecule id="P51559-10"/>
    <property type="protein sequence ID" value="CE33136"/>
    <property type="gene ID" value="WBGene00000254"/>
    <property type="gene designation" value="bli-4"/>
</dbReference>
<dbReference type="WormBase" id="K04F10.4g">
    <molecule id="P51559-11"/>
    <property type="protein sequence ID" value="CE51093"/>
    <property type="gene ID" value="WBGene00000254"/>
    <property type="gene designation" value="bli-4"/>
</dbReference>
<dbReference type="WormBase" id="K04F10.4h">
    <molecule id="P51559-12"/>
    <property type="protein sequence ID" value="CE51059"/>
    <property type="gene ID" value="WBGene00000254"/>
    <property type="gene designation" value="bli-4"/>
</dbReference>
<dbReference type="WormBase" id="K04F10.4i">
    <molecule id="P51559-13"/>
    <property type="protein sequence ID" value="CE51132"/>
    <property type="gene ID" value="WBGene00000254"/>
    <property type="gene designation" value="bli-4"/>
</dbReference>
<dbReference type="WormBase" id="K04F10.4j">
    <molecule id="P51559-14"/>
    <property type="protein sequence ID" value="CE51107"/>
    <property type="gene ID" value="WBGene00000254"/>
    <property type="gene designation" value="bli-4"/>
</dbReference>
<dbReference type="eggNOG" id="KOG3525">
    <property type="taxonomic scope" value="Eukaryota"/>
</dbReference>
<dbReference type="InParanoid" id="P51559"/>
<dbReference type="OMA" id="GTFHDWS"/>
<dbReference type="OrthoDB" id="300641at2759"/>
<dbReference type="PhylomeDB" id="P51559"/>
<dbReference type="PRO" id="PR:P51559"/>
<dbReference type="Proteomes" id="UP000001940">
    <property type="component" value="Chromosome I"/>
</dbReference>
<dbReference type="Bgee" id="WBGene00000254">
    <property type="expression patterns" value="Expressed in pharyngeal muscle cell (C elegans) and 4 other cell types or tissues"/>
</dbReference>
<dbReference type="GO" id="GO:0000139">
    <property type="term" value="C:Golgi membrane"/>
    <property type="evidence" value="ECO:0000318"/>
    <property type="project" value="GO_Central"/>
</dbReference>
<dbReference type="GO" id="GO:0016020">
    <property type="term" value="C:membrane"/>
    <property type="evidence" value="ECO:0000303"/>
    <property type="project" value="UniProtKB"/>
</dbReference>
<dbReference type="GO" id="GO:0005634">
    <property type="term" value="C:nucleus"/>
    <property type="evidence" value="ECO:0000314"/>
    <property type="project" value="WormBase"/>
</dbReference>
<dbReference type="GO" id="GO:0005802">
    <property type="term" value="C:trans-Golgi network"/>
    <property type="evidence" value="ECO:0000318"/>
    <property type="project" value="GO_Central"/>
</dbReference>
<dbReference type="GO" id="GO:0046872">
    <property type="term" value="F:metal ion binding"/>
    <property type="evidence" value="ECO:0007669"/>
    <property type="project" value="UniProtKB-KW"/>
</dbReference>
<dbReference type="GO" id="GO:0004252">
    <property type="term" value="F:serine-type endopeptidase activity"/>
    <property type="evidence" value="ECO:0000318"/>
    <property type="project" value="GO_Central"/>
</dbReference>
<dbReference type="GO" id="GO:1902075">
    <property type="term" value="P:cellular response to salt"/>
    <property type="evidence" value="ECO:0000315"/>
    <property type="project" value="UniProtKB"/>
</dbReference>
<dbReference type="GO" id="GO:0007635">
    <property type="term" value="P:chemosensory behavior"/>
    <property type="evidence" value="ECO:0000315"/>
    <property type="project" value="UniProtKB"/>
</dbReference>
<dbReference type="GO" id="GO:0040002">
    <property type="term" value="P:collagen and cuticulin-based cuticle development"/>
    <property type="evidence" value="ECO:0000315"/>
    <property type="project" value="WormBase"/>
</dbReference>
<dbReference type="GO" id="GO:0045887">
    <property type="term" value="P:positive regulation of synaptic assembly at neuromuscular junction"/>
    <property type="evidence" value="ECO:0000316"/>
    <property type="project" value="UniProtKB"/>
</dbReference>
<dbReference type="GO" id="GO:0016485">
    <property type="term" value="P:protein processing"/>
    <property type="evidence" value="ECO:0000318"/>
    <property type="project" value="GO_Central"/>
</dbReference>
<dbReference type="CDD" id="cd00064">
    <property type="entry name" value="FU"/>
    <property type="match status" value="3"/>
</dbReference>
<dbReference type="CDD" id="cd04059">
    <property type="entry name" value="Peptidases_S8_Protein_convertases_Kexins_Furin-like"/>
    <property type="match status" value="1"/>
</dbReference>
<dbReference type="FunFam" id="3.30.70.850:FF:000006">
    <property type="entry name" value="Endoprotease bli"/>
    <property type="match status" value="1"/>
</dbReference>
<dbReference type="FunFam" id="3.40.50.200:FF:000001">
    <property type="entry name" value="Furin 2, isoform B"/>
    <property type="match status" value="1"/>
</dbReference>
<dbReference type="FunFam" id="2.60.120.260:FF:000006">
    <property type="entry name" value="Proprotein convertase subtilisin/kexin type 5"/>
    <property type="match status" value="1"/>
</dbReference>
<dbReference type="Gene3D" id="2.60.120.260">
    <property type="entry name" value="Galactose-binding domain-like"/>
    <property type="match status" value="1"/>
</dbReference>
<dbReference type="Gene3D" id="2.10.220.10">
    <property type="entry name" value="Hormone Receptor, Insulin-like Growth Factor Receptor 1, Chain A, domain 2"/>
    <property type="match status" value="2"/>
</dbReference>
<dbReference type="Gene3D" id="3.30.70.850">
    <property type="entry name" value="Peptidase S8, pro-domain"/>
    <property type="match status" value="1"/>
</dbReference>
<dbReference type="Gene3D" id="3.40.50.200">
    <property type="entry name" value="Peptidase S8/S53 domain"/>
    <property type="match status" value="1"/>
</dbReference>
<dbReference type="InterPro" id="IPR006212">
    <property type="entry name" value="Furin_repeat"/>
</dbReference>
<dbReference type="InterPro" id="IPR008979">
    <property type="entry name" value="Galactose-bd-like_sf"/>
</dbReference>
<dbReference type="InterPro" id="IPR009030">
    <property type="entry name" value="Growth_fac_rcpt_cys_sf"/>
</dbReference>
<dbReference type="InterPro" id="IPR034182">
    <property type="entry name" value="Kexin/furin"/>
</dbReference>
<dbReference type="InterPro" id="IPR002884">
    <property type="entry name" value="P_dom"/>
</dbReference>
<dbReference type="InterPro" id="IPR000209">
    <property type="entry name" value="Peptidase_S8/S53_dom"/>
</dbReference>
<dbReference type="InterPro" id="IPR036852">
    <property type="entry name" value="Peptidase_S8/S53_dom_sf"/>
</dbReference>
<dbReference type="InterPro" id="IPR023827">
    <property type="entry name" value="Peptidase_S8_Asp-AS"/>
</dbReference>
<dbReference type="InterPro" id="IPR022398">
    <property type="entry name" value="Peptidase_S8_His-AS"/>
</dbReference>
<dbReference type="InterPro" id="IPR023828">
    <property type="entry name" value="Peptidase_S8_Ser-AS"/>
</dbReference>
<dbReference type="InterPro" id="IPR015500">
    <property type="entry name" value="Peptidase_S8_subtilisin-rel"/>
</dbReference>
<dbReference type="InterPro" id="IPR032815">
    <property type="entry name" value="S8_pro-domain"/>
</dbReference>
<dbReference type="InterPro" id="IPR038466">
    <property type="entry name" value="S8_pro-domain_sf"/>
</dbReference>
<dbReference type="PANTHER" id="PTHR42884:SF23">
    <property type="entry name" value="FURIN-LIKE PROTEASE 2"/>
    <property type="match status" value="1"/>
</dbReference>
<dbReference type="PANTHER" id="PTHR42884">
    <property type="entry name" value="PROPROTEIN CONVERTASE SUBTILISIN/KEXIN-RELATED"/>
    <property type="match status" value="1"/>
</dbReference>
<dbReference type="Pfam" id="PF01483">
    <property type="entry name" value="P_proprotein"/>
    <property type="match status" value="1"/>
</dbReference>
<dbReference type="Pfam" id="PF00082">
    <property type="entry name" value="Peptidase_S8"/>
    <property type="match status" value="1"/>
</dbReference>
<dbReference type="Pfam" id="PF16470">
    <property type="entry name" value="S8_pro-domain"/>
    <property type="match status" value="1"/>
</dbReference>
<dbReference type="PRINTS" id="PR00723">
    <property type="entry name" value="SUBTILISIN"/>
</dbReference>
<dbReference type="SMART" id="SM00261">
    <property type="entry name" value="FU"/>
    <property type="match status" value="3"/>
</dbReference>
<dbReference type="SUPFAM" id="SSF49785">
    <property type="entry name" value="Galactose-binding domain-like"/>
    <property type="match status" value="1"/>
</dbReference>
<dbReference type="SUPFAM" id="SSF57184">
    <property type="entry name" value="Growth factor receptor domain"/>
    <property type="match status" value="2"/>
</dbReference>
<dbReference type="SUPFAM" id="SSF54897">
    <property type="entry name" value="Protease propeptides/inhibitors"/>
    <property type="match status" value="1"/>
</dbReference>
<dbReference type="SUPFAM" id="SSF52743">
    <property type="entry name" value="Subtilisin-like"/>
    <property type="match status" value="1"/>
</dbReference>
<dbReference type="PROSITE" id="PS51829">
    <property type="entry name" value="P_HOMO_B"/>
    <property type="match status" value="1"/>
</dbReference>
<dbReference type="PROSITE" id="PS51892">
    <property type="entry name" value="SUBTILASE"/>
    <property type="match status" value="1"/>
</dbReference>
<dbReference type="PROSITE" id="PS00136">
    <property type="entry name" value="SUBTILASE_ASP"/>
    <property type="match status" value="1"/>
</dbReference>
<dbReference type="PROSITE" id="PS00137">
    <property type="entry name" value="SUBTILASE_HIS"/>
    <property type="match status" value="1"/>
</dbReference>
<dbReference type="PROSITE" id="PS00138">
    <property type="entry name" value="SUBTILASE_SER"/>
    <property type="match status" value="1"/>
</dbReference>
<organism>
    <name type="scientific">Caenorhabditis elegans</name>
    <dbReference type="NCBI Taxonomy" id="6239"/>
    <lineage>
        <taxon>Eukaryota</taxon>
        <taxon>Metazoa</taxon>
        <taxon>Ecdysozoa</taxon>
        <taxon>Nematoda</taxon>
        <taxon>Chromadorea</taxon>
        <taxon>Rhabditida</taxon>
        <taxon>Rhabditina</taxon>
        <taxon>Rhabditomorpha</taxon>
        <taxon>Rhabditoidea</taxon>
        <taxon>Rhabditidae</taxon>
        <taxon>Peloderinae</taxon>
        <taxon>Caenorhabditis</taxon>
    </lineage>
</organism>
<keyword id="KW-0025">Alternative splicing</keyword>
<keyword id="KW-0106">Calcium</keyword>
<keyword id="KW-0165">Cleavage on pair of basic residues</keyword>
<keyword id="KW-1015">Disulfide bond</keyword>
<keyword id="KW-0325">Glycoprotein</keyword>
<keyword id="KW-0378">Hydrolase</keyword>
<keyword id="KW-0472">Membrane</keyword>
<keyword id="KW-0479">Metal-binding</keyword>
<keyword id="KW-0645">Protease</keyword>
<keyword id="KW-1185">Reference proteome</keyword>
<keyword id="KW-0677">Repeat</keyword>
<keyword id="KW-0720">Serine protease</keyword>
<keyword id="KW-0732">Signal</keyword>
<keyword id="KW-0812">Transmembrane</keyword>
<keyword id="KW-1133">Transmembrane helix</keyword>
<keyword id="KW-0865">Zymogen</keyword>
<gene>
    <name type="primary">bli-4</name>
    <name type="synonym">kpc-4</name>
    <name type="ORF">K04F10.4</name>
</gene>
<proteinExistence type="evidence at protein level"/>
<comment type="function">
    <text evidence="1 9 10 11 12 13">Serine endoprotease which cleaves proproteins at paired basic amino acids at the consensus RX(K/R)R motif (By similarity). Involved in N-terminal processing of cuticle collagens and plays a role in cuticle biosynthesis (PubMed:24013594, PubMed:37721936). May cleave both sqt-3 and dpy-17 collagens to promote their secretion (PubMed:37721936). Acts in ASEL sensory neurons to regulate high salt chemotaxis responses probably by cleaving insulin-like protein ins-6 into its mature and active form (PubMed:24013594). Essential for embryonic and larval development (PubMed:10903434, PubMed:19716386, PubMed:7774813).</text>
</comment>
<comment type="function">
    <molecule>Isoform a</molecule>
    <text evidence="9 13">Involved in cuticle biosynthesis but dispensable for larval development.</text>
</comment>
<comment type="function">
    <molecule>Isoform e</molecule>
    <text evidence="9 13">Involved in cuticle biosynthesis but dispensable for larval development.</text>
</comment>
<comment type="function">
    <molecule>Isoform f</molecule>
    <text evidence="9 13">Involved in cuticle biosynthesis but dispensable for larval development.</text>
</comment>
<comment type="function">
    <molecule>Isoform g</molecule>
    <text evidence="9 13">Involved in cuticle biosynthesis but dispensable for larval development.</text>
</comment>
<comment type="function">
    <molecule>Isoform h</molecule>
    <text evidence="9 13">Involved in cuticle biosynthesis but dispensable for larval development.</text>
</comment>
<comment type="cofactor">
    <cofactor evidence="2">
        <name>Ca(2+)</name>
        <dbReference type="ChEBI" id="CHEBI:29108"/>
    </cofactor>
    <text evidence="2">Binds 3 calcium ions per subunit.</text>
</comment>
<comment type="subcellular location">
    <subcellularLocation>
        <location evidence="4">Membrane</location>
        <topology evidence="16">Single-pass type I membrane protein</topology>
    </subcellularLocation>
</comment>
<comment type="alternative products">
    <event type="alternative splicing"/>
    <isoform>
        <id>P51559-15</id>
        <name evidence="20">d</name>
        <name evidence="15">D</name>
        <sequence type="displayed"/>
    </isoform>
    <isoform>
        <id>P51559-6</id>
        <name evidence="17">a</name>
        <name evidence="15">A</name>
        <sequence type="described" ref="VSP_058863 VSP_058866"/>
    </isoform>
    <isoform>
        <id>P51559-7</id>
        <name evidence="18">b</name>
        <name evidence="15">B</name>
        <sequence type="described" ref="VSP_058859 VSP_058870"/>
    </isoform>
    <isoform>
        <id>P51559-8</id>
        <name evidence="19">c</name>
        <name evidence="15">C</name>
        <sequence type="described" ref="VSP_058873 VSP_058874"/>
    </isoform>
    <isoform>
        <id>P51559-9</id>
        <name evidence="21">e</name>
        <sequence type="described" ref="VSP_058860 VSP_058869"/>
    </isoform>
    <isoform>
        <id>P51559-10</id>
        <name evidence="22">f</name>
        <sequence type="described" ref="VSP_058864 VSP_058865"/>
    </isoform>
    <isoform>
        <id>P51559-11</id>
        <name evidence="23">g</name>
        <sequence type="described" ref="VSP_058858 VSP_058871"/>
    </isoform>
    <isoform>
        <id>P51559-12</id>
        <name evidence="24">h</name>
        <sequence type="described" ref="VSP_058857 VSP_058872"/>
    </isoform>
    <isoform>
        <id>P51559-13</id>
        <name evidence="25">i</name>
        <sequence type="described" ref="VSP_058861 VSP_058868"/>
    </isoform>
    <isoform>
        <id>P51559-14</id>
        <name evidence="26">j</name>
        <sequence type="described" ref="VSP_058862 VSP_058867"/>
    </isoform>
</comment>
<comment type="tissue specificity">
    <text evidence="13">In larvae and adults, expressed in all hypodermal cells, vulva and ventral nerve cords.</text>
</comment>
<comment type="tissue specificity">
    <molecule>Isoform d</molecule>
    <text evidence="12">Most highly expressed isoform in the embryonic epidermis.</text>
</comment>
<comment type="tissue specificity">
    <molecule>Isoform a</molecule>
    <text evidence="12">Expressed primarily in the germline.</text>
</comment>
<comment type="tissue specificity">
    <molecule>Isoform f</molecule>
    <text evidence="12">Expressed primarily in pharyngeal epithelial cells.</text>
</comment>
<comment type="tissue specificity">
    <molecule>Isoform g</molecule>
    <text evidence="12">Expressed primarily in pharyngeal epithelial cells.</text>
</comment>
<comment type="developmental stage">
    <text evidence="10 13">Expression starts at the two-fold embryonic stage throughout adulthood (PubMed:19716386, PubMed:7774813). Expression increases during L2-L3, L3-L4 and L4-adult molting stages (PubMed:19716386).</text>
</comment>
<comment type="disruption phenotype">
    <text evidence="10 11">RNAi-mediated knockdown causes an arrest at the L1 developmental stage (PubMed:19716386). RNAi-mediated knockdown in ASEL neuron results in a severe reduction in Ca(2+) signal in ASEL neuron and in chemotaxis in response to high salt concentrations (PubMed:24013594).</text>
</comment>
<comment type="similarity">
    <text evidence="16">Belongs to the peptidase S8 family. Furin subfamily.</text>
</comment>
<comment type="sequence caution" evidence="16">
    <conflict type="frameshift">
        <sequence resource="EMBL-CDS" id="AAA98750"/>
    </conflict>
</comment>
<comment type="sequence caution" evidence="16">
    <conflict type="frameshift">
        <sequence resource="EMBL-CDS" id="AAA98751"/>
    </conflict>
</comment>
<name>BLI4_CAEEL</name>